<accession>Q6N260</accession>
<reference key="1">
    <citation type="journal article" date="2004" name="Nat. Biotechnol.">
        <title>Complete genome sequence of the metabolically versatile photosynthetic bacterium Rhodopseudomonas palustris.</title>
        <authorList>
            <person name="Larimer F.W."/>
            <person name="Chain P."/>
            <person name="Hauser L."/>
            <person name="Lamerdin J.E."/>
            <person name="Malfatti S."/>
            <person name="Do L."/>
            <person name="Land M.L."/>
            <person name="Pelletier D.A."/>
            <person name="Beatty J.T."/>
            <person name="Lang A.S."/>
            <person name="Tabita F.R."/>
            <person name="Gibson J.L."/>
            <person name="Hanson T.E."/>
            <person name="Bobst C."/>
            <person name="Torres y Torres J.L."/>
            <person name="Peres C."/>
            <person name="Harrison F.H."/>
            <person name="Gibson J."/>
            <person name="Harwood C.S."/>
        </authorList>
    </citation>
    <scope>NUCLEOTIDE SEQUENCE [LARGE SCALE GENOMIC DNA]</scope>
    <source>
        <strain>ATCC BAA-98 / CGA009</strain>
    </source>
</reference>
<sequence>MATSAAAVQEDPATNFAKDQLRAIIERIERLEEEKKTISDDIRDVYAEAKGNGFDVKALRTIVRMRKQDANERAEQETILETYMQALGML</sequence>
<gene>
    <name type="ordered locus">RPA4190</name>
</gene>
<feature type="chain" id="PRO_0000219930" description="UPF0335 protein RPA4190">
    <location>
        <begin position="1"/>
        <end position="90"/>
    </location>
</feature>
<comment type="similarity">
    <text evidence="1">Belongs to the UPF0335 family.</text>
</comment>
<comment type="sequence caution" evidence="2">
    <conflict type="erroneous initiation">
        <sequence resource="EMBL-CDS" id="CAE29631"/>
    </conflict>
</comment>
<proteinExistence type="inferred from homology"/>
<dbReference type="EMBL" id="BX572606">
    <property type="protein sequence ID" value="CAE29631.1"/>
    <property type="status" value="ALT_INIT"/>
    <property type="molecule type" value="Genomic_DNA"/>
</dbReference>
<dbReference type="RefSeq" id="WP_012497443.1">
    <property type="nucleotide sequence ID" value="NZ_CP116810.1"/>
</dbReference>
<dbReference type="SMR" id="Q6N260"/>
<dbReference type="STRING" id="258594.RPA4190"/>
<dbReference type="eggNOG" id="COG3750">
    <property type="taxonomic scope" value="Bacteria"/>
</dbReference>
<dbReference type="HOGENOM" id="CLU_158651_2_0_5"/>
<dbReference type="PhylomeDB" id="Q6N260"/>
<dbReference type="GO" id="GO:0003677">
    <property type="term" value="F:DNA binding"/>
    <property type="evidence" value="ECO:0007669"/>
    <property type="project" value="InterPro"/>
</dbReference>
<dbReference type="HAMAP" id="MF_00797">
    <property type="entry name" value="UPF0335"/>
    <property type="match status" value="1"/>
</dbReference>
<dbReference type="InterPro" id="IPR018753">
    <property type="entry name" value="GapR-like"/>
</dbReference>
<dbReference type="InterPro" id="IPR046367">
    <property type="entry name" value="GapR-like_DNA-bd"/>
</dbReference>
<dbReference type="NCBIfam" id="NF010247">
    <property type="entry name" value="PRK13694.1"/>
    <property type="match status" value="1"/>
</dbReference>
<dbReference type="Pfam" id="PF10073">
    <property type="entry name" value="GapR_DNA-bd"/>
    <property type="match status" value="1"/>
</dbReference>
<evidence type="ECO:0000255" key="1">
    <source>
        <dbReference type="HAMAP-Rule" id="MF_00797"/>
    </source>
</evidence>
<evidence type="ECO:0000305" key="2"/>
<protein>
    <recommendedName>
        <fullName evidence="1">UPF0335 protein RPA4190</fullName>
    </recommendedName>
</protein>
<name>Y4190_RHOPA</name>
<organism>
    <name type="scientific">Rhodopseudomonas palustris (strain ATCC BAA-98 / CGA009)</name>
    <dbReference type="NCBI Taxonomy" id="258594"/>
    <lineage>
        <taxon>Bacteria</taxon>
        <taxon>Pseudomonadati</taxon>
        <taxon>Pseudomonadota</taxon>
        <taxon>Alphaproteobacteria</taxon>
        <taxon>Hyphomicrobiales</taxon>
        <taxon>Nitrobacteraceae</taxon>
        <taxon>Rhodopseudomonas</taxon>
    </lineage>
</organism>